<sequence>QQDYTGAHFDF</sequence>
<protein>
    <recommendedName>
        <fullName>Caerulein-2.2/2.2Y4</fullName>
    </recommendedName>
</protein>
<evidence type="ECO:0000269" key="1">
    <source>
    </source>
</evidence>
<evidence type="ECO:0000305" key="2"/>
<organism>
    <name type="scientific">Ranoidea citropa</name>
    <name type="common">Australian Blue Mountains tree frog</name>
    <name type="synonym">Litoria citropa</name>
    <dbReference type="NCBI Taxonomy" id="94770"/>
    <lineage>
        <taxon>Eukaryota</taxon>
        <taxon>Metazoa</taxon>
        <taxon>Chordata</taxon>
        <taxon>Craniata</taxon>
        <taxon>Vertebrata</taxon>
        <taxon>Euteleostomi</taxon>
        <taxon>Amphibia</taxon>
        <taxon>Batrachia</taxon>
        <taxon>Anura</taxon>
        <taxon>Neobatrachia</taxon>
        <taxon>Hyloidea</taxon>
        <taxon>Hylidae</taxon>
        <taxon>Pelodryadinae</taxon>
        <taxon>Ranoidea</taxon>
    </lineage>
</organism>
<accession>P82088</accession>
<proteinExistence type="evidence at protein level"/>
<reference key="1">
    <citation type="journal article" date="1999" name="Rapid Commun. Mass Spectrom.">
        <title>Caerulein-like peptides from the skin glands of the Australian blue mountains tree frog Litoria citropa. Part 1. Sequence determination using electrospray mass spectrometry.</title>
        <authorList>
            <person name="Wabnitz P.A."/>
            <person name="Bowie J.H."/>
            <person name="Tyler M.J."/>
        </authorList>
    </citation>
    <scope>PROTEIN SEQUENCE</scope>
    <scope>PYROGLUTAMATE FORMATION AT GLN-1</scope>
    <scope>SULFATION AT TYR-4</scope>
    <scope>AMIDATION AT PHE-11</scope>
    <scope>MASS SPECTROMETRY</scope>
    <source>
        <tissue>Skin secretion</tissue>
    </source>
</reference>
<comment type="function">
    <text evidence="2">Hypotensive neuropeptide.</text>
</comment>
<comment type="subcellular location">
    <subcellularLocation>
        <location>Secreted</location>
    </subcellularLocation>
</comment>
<comment type="tissue specificity">
    <text>Expressed by the skin dorsal glands.</text>
</comment>
<comment type="PTM">
    <text evidence="1">Isoform 2.2Y4 differs from isoform 2.2 in not being sulfated.</text>
</comment>
<comment type="mass spectrometry"/>
<comment type="similarity">
    <text evidence="2">Belongs to the gastrin/cholecystokinin family.</text>
</comment>
<dbReference type="GO" id="GO:0005576">
    <property type="term" value="C:extracellular region"/>
    <property type="evidence" value="ECO:0007669"/>
    <property type="project" value="UniProtKB-SubCell"/>
</dbReference>
<dbReference type="GO" id="GO:0006952">
    <property type="term" value="P:defense response"/>
    <property type="evidence" value="ECO:0007669"/>
    <property type="project" value="UniProtKB-KW"/>
</dbReference>
<dbReference type="GO" id="GO:0008217">
    <property type="term" value="P:regulation of blood pressure"/>
    <property type="evidence" value="ECO:0007669"/>
    <property type="project" value="UniProtKB-KW"/>
</dbReference>
<name>CAE22_RANCI</name>
<keyword id="KW-0027">Amidation</keyword>
<keyword id="KW-0878">Amphibian defense peptide</keyword>
<keyword id="KW-0903">Direct protein sequencing</keyword>
<keyword id="KW-0382">Hypotensive agent</keyword>
<keyword id="KW-0873">Pyrrolidone carboxylic acid</keyword>
<keyword id="KW-0964">Secreted</keyword>
<keyword id="KW-0765">Sulfation</keyword>
<feature type="peptide" id="PRO_0000043881" description="Caerulein-2.2/2.2Y4">
    <location>
        <begin position="1"/>
        <end position="11"/>
    </location>
</feature>
<feature type="modified residue" description="Pyrrolidone carboxylic acid" evidence="1">
    <location>
        <position position="1"/>
    </location>
</feature>
<feature type="modified residue" description="Sulfotyrosine" evidence="1">
    <location>
        <position position="4"/>
    </location>
</feature>
<feature type="modified residue" description="Phenylalanine amide" evidence="1">
    <location>
        <position position="11"/>
    </location>
</feature>